<evidence type="ECO:0000305" key="1"/>
<sequence>MPRNDQFNNSHPLDDYIEQQQLNNLDNNSNVSLANQNTVLDDFQQQFSDKEMQKIESISQQIKPLDNDGLLSYGSHLQENMSKFSHKMLDEVQTKDIGPVGDSLNQLMTKLKAVNPDELNPEKQSKLKRFFKRTKASINEVFSRMQSVSSQIDRITIQLDRHKNNLSKDIKLLDGLYQQNKDYFDDVNLYIAAAKRRKHEIQTNDIPKLQEHANQTGNQMDIQAVADMEQFVDRLDKRIYDLQLSRQIAIQTAPQIRMIQNVNQALAEKIQSSILTSIPLWKNQMAIALTLMRQRNAVSAQRAVTDTTNDLLTQNAAMLKQNAIETATENERGIVDIETLKTTQSDIIETIEQTLQIQQNGRQKRKEAEKELVGLEDELKQHLLSMKKE</sequence>
<protein>
    <recommendedName>
        <fullName>TelA-like protein SH1505</fullName>
    </recommendedName>
</protein>
<feature type="chain" id="PRO_0000281405" description="TelA-like protein SH1505">
    <location>
        <begin position="1"/>
        <end position="389"/>
    </location>
</feature>
<comment type="similarity">
    <text evidence="1">Belongs to the TelA family.</text>
</comment>
<accession>Q4L6B1</accession>
<dbReference type="EMBL" id="AP006716">
    <property type="protein sequence ID" value="BAE04814.1"/>
    <property type="molecule type" value="Genomic_DNA"/>
</dbReference>
<dbReference type="SMR" id="Q4L6B1"/>
<dbReference type="KEGG" id="sha:SH1505"/>
<dbReference type="eggNOG" id="COG3853">
    <property type="taxonomic scope" value="Bacteria"/>
</dbReference>
<dbReference type="HOGENOM" id="CLU_032111_0_0_9"/>
<dbReference type="OrthoDB" id="9768858at2"/>
<dbReference type="Proteomes" id="UP000000543">
    <property type="component" value="Chromosome"/>
</dbReference>
<dbReference type="InterPro" id="IPR008863">
    <property type="entry name" value="Toxic_anion-R_TelA"/>
</dbReference>
<dbReference type="PANTHER" id="PTHR38432">
    <property type="entry name" value="TELA-LIKE PROTEIN SAOUHSC_01408"/>
    <property type="match status" value="1"/>
</dbReference>
<dbReference type="PANTHER" id="PTHR38432:SF1">
    <property type="entry name" value="TELA-LIKE PROTEIN SAOUHSC_01408"/>
    <property type="match status" value="1"/>
</dbReference>
<dbReference type="Pfam" id="PF05816">
    <property type="entry name" value="TelA"/>
    <property type="match status" value="1"/>
</dbReference>
<dbReference type="PIRSF" id="PIRSF026508">
    <property type="entry name" value="TelA"/>
    <property type="match status" value="1"/>
</dbReference>
<gene>
    <name type="ordered locus">SH1505</name>
</gene>
<name>TELL_STAHJ</name>
<proteinExistence type="inferred from homology"/>
<organism>
    <name type="scientific">Staphylococcus haemolyticus (strain JCSC1435)</name>
    <dbReference type="NCBI Taxonomy" id="279808"/>
    <lineage>
        <taxon>Bacteria</taxon>
        <taxon>Bacillati</taxon>
        <taxon>Bacillota</taxon>
        <taxon>Bacilli</taxon>
        <taxon>Bacillales</taxon>
        <taxon>Staphylococcaceae</taxon>
        <taxon>Staphylococcus</taxon>
    </lineage>
</organism>
<reference key="1">
    <citation type="journal article" date="2005" name="J. Bacteriol.">
        <title>Whole-genome sequencing of Staphylococcus haemolyticus uncovers the extreme plasticity of its genome and the evolution of human-colonizing staphylococcal species.</title>
        <authorList>
            <person name="Takeuchi F."/>
            <person name="Watanabe S."/>
            <person name="Baba T."/>
            <person name="Yuzawa H."/>
            <person name="Ito T."/>
            <person name="Morimoto Y."/>
            <person name="Kuroda M."/>
            <person name="Cui L."/>
            <person name="Takahashi M."/>
            <person name="Ankai A."/>
            <person name="Baba S."/>
            <person name="Fukui S."/>
            <person name="Lee J.C."/>
            <person name="Hiramatsu K."/>
        </authorList>
    </citation>
    <scope>NUCLEOTIDE SEQUENCE [LARGE SCALE GENOMIC DNA]</scope>
    <source>
        <strain>JCSC1435</strain>
    </source>
</reference>